<protein>
    <recommendedName>
        <fullName>Probable molybdopterin synthase</fullName>
        <shortName>MPT synthase</shortName>
        <ecNumber>2.8.1.-</ecNumber>
    </recommendedName>
</protein>
<sequence>MHVLGIVGAGATTLCDRLAAQLDGRVATVESLPESATEPESTDGVAAAYGLSPDGNWVGSGDDRDLDGLLDDLSAEYDYALLSGFPDARVPTVALAGVDAANVVAEAETADAADVASLAAEIDSHEPHVTLETLVERAKADPLEVYAGAIATFTGRVRAKESEDDDPTLSLEFEKYDGVAESKMDAISEELEARDGVLRVLMHHRVGVVEDGADIVFVVVLAGHRREAFRTVEDGIDRLKDEVPIFKKETTTDEEFWVHDR</sequence>
<reference key="1">
    <citation type="journal article" date="2010" name="PLoS ONE">
        <title>The complete genome sequence of Haloferax volcanii DS2, a model archaeon.</title>
        <authorList>
            <person name="Hartman A.L."/>
            <person name="Norais C."/>
            <person name="Badger J.H."/>
            <person name="Delmas S."/>
            <person name="Haldenby S."/>
            <person name="Madupu R."/>
            <person name="Robinson J."/>
            <person name="Khouri H."/>
            <person name="Ren Q."/>
            <person name="Lowe T.M."/>
            <person name="Maupin-Furlow J."/>
            <person name="Pohlschroder M."/>
            <person name="Daniels C."/>
            <person name="Pfeiffer F."/>
            <person name="Allers T."/>
            <person name="Eisen J.A."/>
        </authorList>
    </citation>
    <scope>NUCLEOTIDE SEQUENCE [LARGE SCALE GENOMIC DNA]</scope>
    <source>
        <strain>ATCC 29605 / DSM 3757 / JCM 8879 / NBRC 14742 / NCIMB 2012 / VKM B-1768 / DS2</strain>
    </source>
</reference>
<reference key="2">
    <citation type="journal article" date="2014" name="PLoS Genet.">
        <title>Phylogenetically driven sequencing of extremely halophilic archaea reveals strategies for static and dynamic osmo-response.</title>
        <authorList>
            <person name="Becker E.A."/>
            <person name="Seitzer P.M."/>
            <person name="Tritt A."/>
            <person name="Larsen D."/>
            <person name="Krusor M."/>
            <person name="Yao A.I."/>
            <person name="Wu D."/>
            <person name="Madern D."/>
            <person name="Eisen J.A."/>
            <person name="Darling A.E."/>
            <person name="Facciotti M.T."/>
        </authorList>
    </citation>
    <scope>NUCLEOTIDE SEQUENCE [LARGE SCALE GENOMIC DNA]</scope>
    <source>
        <strain>ATCC 29605 / DSM 3757 / JCM 8879 / NBRC 14742 / NCIMB 2012 / VKM B-1768 / DS2</strain>
    </source>
</reference>
<reference key="3">
    <citation type="journal article" date="2010" name="Nature">
        <title>Ubiquitin-like small archaeal modifier proteins (SAMPs) in Haloferax volcanii.</title>
        <authorList>
            <person name="Humbard M.A."/>
            <person name="Miranda H.V."/>
            <person name="Lim J.M."/>
            <person name="Krause D.J."/>
            <person name="Pritz J.R."/>
            <person name="Zhou G."/>
            <person name="Chen S."/>
            <person name="Wells L."/>
            <person name="Maupin-Furlow J.A."/>
        </authorList>
    </citation>
    <scope>SAMPYLATION</scope>
    <scope>IDENTIFICATION BY MASS SPECTROMETRY</scope>
    <source>
        <strain>ATCC 29605 / DSM 3757 / JCM 8879 / NBRC 14742 / NCIMB 2012 / VKM B-1768 / DS2</strain>
    </source>
</reference>
<reference key="4">
    <citation type="journal article" date="2011" name="Proc. Natl. Acad. Sci. U.S.A.">
        <title>E1- and ubiquitin-like proteins provide a direct link between protein conjugation and sulfur transfer in archaea.</title>
        <authorList>
            <person name="Miranda H.V."/>
            <person name="Nembhard N."/>
            <person name="Su D."/>
            <person name="Hepowit N."/>
            <person name="Krause D.J."/>
            <person name="Pritz J.R."/>
            <person name="Phillips C."/>
            <person name="Soll D."/>
            <person name="Maupin-Furlow J.A."/>
        </authorList>
    </citation>
    <scope>FUNCTION</scope>
    <scope>DISRUPTION PHENOTYPE</scope>
    <source>
        <strain>DS2 / DS70</strain>
    </source>
</reference>
<reference key="5">
    <citation type="journal article" date="2012" name="Mol. Microbiol.">
        <title>Archaeal JAB1/MPN/MOV34 metalloenzyme (HvJAMM1) cleaves ubiquitin-like small archaeal modifier proteins (SAMPs) from protein-conjugates.</title>
        <authorList>
            <person name="Hepowit N.L."/>
            <person name="Uthandi S."/>
            <person name="Miranda H.V."/>
            <person name="Toniutti M."/>
            <person name="Prunetti L."/>
            <person name="Olivarez O."/>
            <person name="De Vera I.M."/>
            <person name="Fanucci G.E."/>
            <person name="Chen S."/>
            <person name="Maupin-Furlow J.A."/>
        </authorList>
    </citation>
    <scope>SAMPYLATION AT LYS-240 AND LYS-247 WITH SAMP1</scope>
    <source>
        <strain>DS2 / DS70</strain>
    </source>
</reference>
<reference key="6">
    <citation type="journal article" date="2014" name="Mol. Cell. Proteomics">
        <title>Archaeal ubiquitin-like SAMP3 is isopeptide-linked to proteins via a UbaA-dependent mechanism.</title>
        <authorList>
            <person name="Miranda H.V."/>
            <person name="Antelmann H."/>
            <person name="Hepowit N."/>
            <person name="Chavarria N.E."/>
            <person name="Krause D.J."/>
            <person name="Pritz J.R."/>
            <person name="Basell K."/>
            <person name="Becher D."/>
            <person name="Humbard M.A."/>
            <person name="Brocchieri L."/>
            <person name="Maupin-Furlow J.A."/>
        </authorList>
    </citation>
    <scope>SAMPYLATION AT LYS-240 AND LYS-247 WITH SAMP3</scope>
    <source>
        <strain>DS2 / DS70</strain>
    </source>
</reference>
<keyword id="KW-1017">Isopeptide bond</keyword>
<keyword id="KW-0501">Molybdenum cofactor biosynthesis</keyword>
<keyword id="KW-1185">Reference proteome</keyword>
<keyword id="KW-0808">Transferase</keyword>
<keyword id="KW-0832">Ubl conjugation</keyword>
<proteinExistence type="evidence at protein level"/>
<name>MOAE_HALVD</name>
<dbReference type="EC" id="2.8.1.-"/>
<dbReference type="EMBL" id="CP001956">
    <property type="protein sequence ID" value="ADE02555.1"/>
    <property type="molecule type" value="Genomic_DNA"/>
</dbReference>
<dbReference type="EMBL" id="AOHU01000036">
    <property type="protein sequence ID" value="ELY34758.1"/>
    <property type="molecule type" value="Genomic_DNA"/>
</dbReference>
<dbReference type="RefSeq" id="WP_004041746.1">
    <property type="nucleotide sequence ID" value="NC_013967.1"/>
</dbReference>
<dbReference type="SMR" id="D4GSW7"/>
<dbReference type="STRING" id="309800.HVO_1864"/>
<dbReference type="PaxDb" id="309800-C498_04590"/>
<dbReference type="EnsemblBacteria" id="ADE02555">
    <property type="protein sequence ID" value="ADE02555"/>
    <property type="gene ID" value="HVO_1864"/>
</dbReference>
<dbReference type="GeneID" id="8925765"/>
<dbReference type="KEGG" id="hvo:HVO_1864"/>
<dbReference type="PATRIC" id="fig|309800.29.peg.892"/>
<dbReference type="eggNOG" id="arCOG00533">
    <property type="taxonomic scope" value="Archaea"/>
</dbReference>
<dbReference type="HOGENOM" id="CLU_088141_0_0_2"/>
<dbReference type="OrthoDB" id="45235at2157"/>
<dbReference type="BioCyc" id="MetaCyc:MONOMER-20242"/>
<dbReference type="UniPathway" id="UPA00344"/>
<dbReference type="Proteomes" id="UP000008243">
    <property type="component" value="Chromosome"/>
</dbReference>
<dbReference type="Proteomes" id="UP000011532">
    <property type="component" value="Unassembled WGS sequence"/>
</dbReference>
<dbReference type="GO" id="GO:0016740">
    <property type="term" value="F:transferase activity"/>
    <property type="evidence" value="ECO:0007669"/>
    <property type="project" value="UniProtKB-KW"/>
</dbReference>
<dbReference type="GO" id="GO:0006777">
    <property type="term" value="P:Mo-molybdopterin cofactor biosynthetic process"/>
    <property type="evidence" value="ECO:0007669"/>
    <property type="project" value="UniProtKB-KW"/>
</dbReference>
<dbReference type="CDD" id="cd00756">
    <property type="entry name" value="MoaE"/>
    <property type="match status" value="1"/>
</dbReference>
<dbReference type="Gene3D" id="3.90.1170.40">
    <property type="entry name" value="Molybdopterin biosynthesis MoaE subunit"/>
    <property type="match status" value="1"/>
</dbReference>
<dbReference type="InterPro" id="IPR036563">
    <property type="entry name" value="MoaE_sf"/>
</dbReference>
<dbReference type="InterPro" id="IPR003448">
    <property type="entry name" value="Mopterin_biosynth_MoaE"/>
</dbReference>
<dbReference type="NCBIfam" id="NF011061">
    <property type="entry name" value="PRK14493.1"/>
    <property type="match status" value="1"/>
</dbReference>
<dbReference type="PANTHER" id="PTHR23404">
    <property type="entry name" value="MOLYBDOPTERIN SYNTHASE RELATED"/>
    <property type="match status" value="1"/>
</dbReference>
<dbReference type="Pfam" id="PF02391">
    <property type="entry name" value="MoaE"/>
    <property type="match status" value="1"/>
</dbReference>
<dbReference type="SUPFAM" id="SSF54690">
    <property type="entry name" value="Molybdopterin synthase subunit MoaE"/>
    <property type="match status" value="1"/>
</dbReference>
<comment type="function">
    <text evidence="7">Converts molybdopterin precursor Z into molybdopterin. This requires the incorporation of two sulfur atoms into precursor Z to generate a dithiolene group. The sulfur is provided by the thiocarboxylated form of SAMP1 (Probable).</text>
</comment>
<comment type="pathway">
    <text>Cofactor biosynthesis; molybdopterin biosynthesis.</text>
</comment>
<comment type="PTM">
    <text evidence="2 4 5">Sampylated at Lys-240 and Lys-247 with the archaeal ubiquitin-like proteins SAMP1 and SAMP3, which may regulate enzymatic activity.</text>
</comment>
<comment type="disruption phenotype">
    <text evidence="3">Cells lacking this gene do not grow anaerobically with DMSO and do not show DMSO reductase activity although dmsA transcript is present, indicating lack of maturation of the DmsA apoprotein into the MoCo-holoprotein. Their growth in the presence of oxygen is not affected. Disruption of this gene does not affect the formation of SAMP-protein conjugates.</text>
</comment>
<comment type="similarity">
    <text evidence="6">In the C-terminal section; belongs to the MoaE family.</text>
</comment>
<feature type="chain" id="PRO_0000428941" description="Probable molybdopterin synthase">
    <location>
        <begin position="1"/>
        <end position="261"/>
    </location>
</feature>
<feature type="binding site" evidence="1">
    <location>
        <begin position="156"/>
        <end position="158"/>
    </location>
    <ligand>
        <name>substrate</name>
    </ligand>
</feature>
<feature type="binding site" evidence="1">
    <location>
        <position position="168"/>
    </location>
    <ligand>
        <name>substrate</name>
    </ligand>
</feature>
<feature type="binding site" evidence="1">
    <location>
        <begin position="224"/>
        <end position="225"/>
    </location>
    <ligand>
        <name>substrate</name>
    </ligand>
</feature>
<feature type="binding site" evidence="1">
    <location>
        <position position="240"/>
    </location>
    <ligand>
        <name>substrate</name>
    </ligand>
</feature>
<feature type="binding site" evidence="1">
    <location>
        <begin position="247"/>
        <end position="249"/>
    </location>
    <ligand>
        <name>substrate</name>
    </ligand>
</feature>
<feature type="cross-link" description="Glycyl lysine isopeptide (Lys-Gly) (interchain with G-Cter in SAMP1); alternate">
    <location>
        <position position="240"/>
    </location>
</feature>
<feature type="cross-link" description="Glycyl lysine isopeptide (Lys-Gly) (interchain with G-Cter in SAMP3); alternate">
    <location>
        <position position="240"/>
    </location>
</feature>
<feature type="cross-link" description="Glycyl lysine isopeptide (Lys-Gly) (interchain with G-Cter in SAMP1); alternate">
    <location>
        <position position="247"/>
    </location>
</feature>
<feature type="cross-link" description="Glycyl lysine isopeptide (Lys-Gly) (interchain with G-Cter in SAMP3); alternate">
    <location>
        <position position="247"/>
    </location>
</feature>
<organism>
    <name type="scientific">Haloferax volcanii (strain ATCC 29605 / DSM 3757 / JCM 8879 / NBRC 14742 / NCIMB 2012 / VKM B-1768 / DS2)</name>
    <name type="common">Halobacterium volcanii</name>
    <dbReference type="NCBI Taxonomy" id="309800"/>
    <lineage>
        <taxon>Archaea</taxon>
        <taxon>Methanobacteriati</taxon>
        <taxon>Methanobacteriota</taxon>
        <taxon>Stenosarchaea group</taxon>
        <taxon>Halobacteria</taxon>
        <taxon>Halobacteriales</taxon>
        <taxon>Haloferacaceae</taxon>
        <taxon>Haloferax</taxon>
    </lineage>
</organism>
<accession>D4GSW7</accession>
<evidence type="ECO:0000250" key="1"/>
<evidence type="ECO:0000269" key="2">
    <source>
    </source>
</evidence>
<evidence type="ECO:0000269" key="3">
    <source>
    </source>
</evidence>
<evidence type="ECO:0000269" key="4">
    <source>
    </source>
</evidence>
<evidence type="ECO:0000269" key="5">
    <source>
    </source>
</evidence>
<evidence type="ECO:0000305" key="6"/>
<evidence type="ECO:0000305" key="7">
    <source>
    </source>
</evidence>
<gene>
    <name type="primary">moaE</name>
    <name type="ordered locus">HVO_1864</name>
    <name type="ORF">C498_04590</name>
</gene>